<keyword id="KW-0067">ATP-binding</keyword>
<keyword id="KW-0963">Cytoplasm</keyword>
<keyword id="KW-0329">Glyoxylate bypass</keyword>
<keyword id="KW-0378">Hydrolase</keyword>
<keyword id="KW-0418">Kinase</keyword>
<keyword id="KW-0547">Nucleotide-binding</keyword>
<keyword id="KW-0904">Protein phosphatase</keyword>
<keyword id="KW-0723">Serine/threonine-protein kinase</keyword>
<keyword id="KW-0808">Transferase</keyword>
<keyword id="KW-0816">Tricarboxylic acid cycle</keyword>
<organism>
    <name type="scientific">Escherichia coli (strain UTI89 / UPEC)</name>
    <dbReference type="NCBI Taxonomy" id="364106"/>
    <lineage>
        <taxon>Bacteria</taxon>
        <taxon>Pseudomonadati</taxon>
        <taxon>Pseudomonadota</taxon>
        <taxon>Gammaproteobacteria</taxon>
        <taxon>Enterobacterales</taxon>
        <taxon>Enterobacteriaceae</taxon>
        <taxon>Escherichia</taxon>
    </lineage>
</organism>
<name>ACEK_ECOUT</name>
<protein>
    <recommendedName>
        <fullName evidence="1">Isocitrate dehydrogenase kinase/phosphatase</fullName>
        <shortName evidence="1">IDH kinase/phosphatase</shortName>
        <shortName evidence="1">IDHK/P</shortName>
        <ecNumber evidence="1">2.7.11.5</ecNumber>
        <ecNumber evidence="1">3.1.3.-</ecNumber>
    </recommendedName>
</protein>
<comment type="function">
    <text evidence="1">Bifunctional enzyme which can phosphorylate or dephosphorylate isocitrate dehydrogenase (IDH) on a specific serine residue. This is a regulatory mechanism which enables bacteria to bypass the Krebs cycle via the glyoxylate shunt in response to the source of carbon. When bacteria are grown on glucose, IDH is fully active and unphosphorylated, but when grown on acetate or ethanol, the activity of IDH declines drastically concomitant with its phosphorylation.</text>
</comment>
<comment type="catalytic activity">
    <reaction evidence="1">
        <text>L-seryl-[isocitrate dehydrogenase] + ATP = O-phospho-L-seryl-[isocitrate dehydrogenase] + ADP + H(+)</text>
        <dbReference type="Rhea" id="RHEA:43540"/>
        <dbReference type="Rhea" id="RHEA-COMP:10605"/>
        <dbReference type="Rhea" id="RHEA-COMP:10606"/>
        <dbReference type="ChEBI" id="CHEBI:15378"/>
        <dbReference type="ChEBI" id="CHEBI:29999"/>
        <dbReference type="ChEBI" id="CHEBI:30616"/>
        <dbReference type="ChEBI" id="CHEBI:83421"/>
        <dbReference type="ChEBI" id="CHEBI:456216"/>
        <dbReference type="EC" id="2.7.11.5"/>
    </reaction>
</comment>
<comment type="subcellular location">
    <subcellularLocation>
        <location evidence="1">Cytoplasm</location>
    </subcellularLocation>
</comment>
<comment type="similarity">
    <text evidence="1">Belongs to the AceK family.</text>
</comment>
<sequence length="574" mass="67206">MPRGLELLIAQTILQGFDAQYGRFLEVTSGAQQRFEQADWHAVQQAMKNRIHLYDHHVGLVVEQLRCITNGQSTDAAFLLRVKEHYTRLLPDYPRFEIAESFFNSVYCRLFDHRSLTPERLFIFSSQPERRFRTIPRPLAKDFHPDHGWESLLMRVISDLPLRLRWQNKSRDIHYIVRHLTETLGTDNLAESHLQVANELFYRNKAAWLVGKLITPSGTLPFLLPIHQTDDGELFIDTCLTTTAEASIVFGFARSYFMVYAPLPAALVEWLREILPGKTTAELYMAIGCQKHAKTESYREYLVYLQGCNEQFIEAPGIRGMVMLVFTLPGFDRVFKVIKDRFAPQKEMSAAHVRACYQLVKEHDRVGRMADTQEFENFVLEKRHISPALMELLLQEAAEKITDLGEQIVIRHLYIERRMVPLNIWLEQVEGQQLRDAIEEYGNAIRQLAAANIFPGDMLFKNFGVTRHGRVVFYDYDEICYMTEVNFRDIPLPRYPEDELASEPWYSVSPGDVFPEEFRHWLCADPRIGPLFEEMHADLFRADYWRALQNRIREGHVEDVYAYRRRQRFSVRFV</sequence>
<reference key="1">
    <citation type="journal article" date="2006" name="Proc. Natl. Acad. Sci. U.S.A.">
        <title>Identification of genes subject to positive selection in uropathogenic strains of Escherichia coli: a comparative genomics approach.</title>
        <authorList>
            <person name="Chen S.L."/>
            <person name="Hung C.-S."/>
            <person name="Xu J."/>
            <person name="Reigstad C.S."/>
            <person name="Magrini V."/>
            <person name="Sabo A."/>
            <person name="Blasiar D."/>
            <person name="Bieri T."/>
            <person name="Meyer R.R."/>
            <person name="Ozersky P."/>
            <person name="Armstrong J.R."/>
            <person name="Fulton R.S."/>
            <person name="Latreille J.P."/>
            <person name="Spieth J."/>
            <person name="Hooton T.M."/>
            <person name="Mardis E.R."/>
            <person name="Hultgren S.J."/>
            <person name="Gordon J.I."/>
        </authorList>
    </citation>
    <scope>NUCLEOTIDE SEQUENCE [LARGE SCALE GENOMIC DNA]</scope>
    <source>
        <strain>UTI89 / UPEC</strain>
    </source>
</reference>
<gene>
    <name evidence="1" type="primary">aceK</name>
    <name type="ordered locus">UTI89_C4575</name>
</gene>
<evidence type="ECO:0000255" key="1">
    <source>
        <dbReference type="HAMAP-Rule" id="MF_00747"/>
    </source>
</evidence>
<proteinExistence type="inferred from homology"/>
<dbReference type="EC" id="2.7.11.5" evidence="1"/>
<dbReference type="EC" id="3.1.3.-" evidence="1"/>
<dbReference type="EMBL" id="CP000243">
    <property type="protein sequence ID" value="ABE09983.1"/>
    <property type="molecule type" value="Genomic_DNA"/>
</dbReference>
<dbReference type="RefSeq" id="WP_001137237.1">
    <property type="nucleotide sequence ID" value="NZ_CP064825.1"/>
</dbReference>
<dbReference type="SMR" id="Q1R3T1"/>
<dbReference type="KEGG" id="eci:UTI89_C4575"/>
<dbReference type="HOGENOM" id="CLU_033804_1_1_6"/>
<dbReference type="Proteomes" id="UP000001952">
    <property type="component" value="Chromosome"/>
</dbReference>
<dbReference type="GO" id="GO:0005737">
    <property type="term" value="C:cytoplasm"/>
    <property type="evidence" value="ECO:0007669"/>
    <property type="project" value="UniProtKB-SubCell"/>
</dbReference>
<dbReference type="GO" id="GO:0008772">
    <property type="term" value="F:[isocitrate dehydrogenase (NADP+)] kinase activity"/>
    <property type="evidence" value="ECO:0007669"/>
    <property type="project" value="UniProtKB-UniRule"/>
</dbReference>
<dbReference type="GO" id="GO:0016208">
    <property type="term" value="F:AMP binding"/>
    <property type="evidence" value="ECO:0007669"/>
    <property type="project" value="TreeGrafter"/>
</dbReference>
<dbReference type="GO" id="GO:0005524">
    <property type="term" value="F:ATP binding"/>
    <property type="evidence" value="ECO:0007669"/>
    <property type="project" value="UniProtKB-UniRule"/>
</dbReference>
<dbReference type="GO" id="GO:0004721">
    <property type="term" value="F:phosphoprotein phosphatase activity"/>
    <property type="evidence" value="ECO:0007669"/>
    <property type="project" value="UniProtKB-KW"/>
</dbReference>
<dbReference type="GO" id="GO:0004674">
    <property type="term" value="F:protein serine/threonine kinase activity"/>
    <property type="evidence" value="ECO:0007669"/>
    <property type="project" value="UniProtKB-KW"/>
</dbReference>
<dbReference type="GO" id="GO:0006006">
    <property type="term" value="P:glucose metabolic process"/>
    <property type="evidence" value="ECO:0007669"/>
    <property type="project" value="InterPro"/>
</dbReference>
<dbReference type="GO" id="GO:0006097">
    <property type="term" value="P:glyoxylate cycle"/>
    <property type="evidence" value="ECO:0007669"/>
    <property type="project" value="UniProtKB-UniRule"/>
</dbReference>
<dbReference type="GO" id="GO:0006099">
    <property type="term" value="P:tricarboxylic acid cycle"/>
    <property type="evidence" value="ECO:0007669"/>
    <property type="project" value="UniProtKB-UniRule"/>
</dbReference>
<dbReference type="HAMAP" id="MF_00747">
    <property type="entry name" value="AceK"/>
    <property type="match status" value="1"/>
</dbReference>
<dbReference type="InterPro" id="IPR046855">
    <property type="entry name" value="AceK_kinase"/>
</dbReference>
<dbReference type="InterPro" id="IPR046854">
    <property type="entry name" value="AceK_regulatory"/>
</dbReference>
<dbReference type="InterPro" id="IPR010452">
    <property type="entry name" value="Isocitrate_DH_AceK"/>
</dbReference>
<dbReference type="NCBIfam" id="NF002804">
    <property type="entry name" value="PRK02946.1"/>
    <property type="match status" value="1"/>
</dbReference>
<dbReference type="PANTHER" id="PTHR39559">
    <property type="match status" value="1"/>
</dbReference>
<dbReference type="PANTHER" id="PTHR39559:SF1">
    <property type="entry name" value="ISOCITRATE DEHYDROGENASE KINASE_PHOSPHATASE"/>
    <property type="match status" value="1"/>
</dbReference>
<dbReference type="Pfam" id="PF06315">
    <property type="entry name" value="AceK_kinase"/>
    <property type="match status" value="1"/>
</dbReference>
<dbReference type="Pfam" id="PF20423">
    <property type="entry name" value="AceK_regulatory"/>
    <property type="match status" value="1"/>
</dbReference>
<dbReference type="PIRSF" id="PIRSF000719">
    <property type="entry name" value="AceK"/>
    <property type="match status" value="1"/>
</dbReference>
<accession>Q1R3T1</accession>
<feature type="chain" id="PRO_0000259150" description="Isocitrate dehydrogenase kinase/phosphatase">
    <location>
        <begin position="1"/>
        <end position="574"/>
    </location>
</feature>
<feature type="active site" evidence="1">
    <location>
        <position position="371"/>
    </location>
</feature>
<feature type="binding site" evidence="1">
    <location>
        <begin position="315"/>
        <end position="321"/>
    </location>
    <ligand>
        <name>ATP</name>
        <dbReference type="ChEBI" id="CHEBI:30616"/>
    </ligand>
</feature>
<feature type="binding site" evidence="1">
    <location>
        <position position="336"/>
    </location>
    <ligand>
        <name>ATP</name>
        <dbReference type="ChEBI" id="CHEBI:30616"/>
    </ligand>
</feature>